<reference key="1">
    <citation type="submission" date="2008-02" db="EMBL/GenBank/DDBJ databases">
        <title>Complete sequence of Shewanella woodyi ATCC 51908.</title>
        <authorList>
            <consortium name="US DOE Joint Genome Institute"/>
            <person name="Copeland A."/>
            <person name="Lucas S."/>
            <person name="Lapidus A."/>
            <person name="Glavina del Rio T."/>
            <person name="Dalin E."/>
            <person name="Tice H."/>
            <person name="Bruce D."/>
            <person name="Goodwin L."/>
            <person name="Pitluck S."/>
            <person name="Sims D."/>
            <person name="Brettin T."/>
            <person name="Detter J.C."/>
            <person name="Han C."/>
            <person name="Kuske C.R."/>
            <person name="Schmutz J."/>
            <person name="Larimer F."/>
            <person name="Land M."/>
            <person name="Hauser L."/>
            <person name="Kyrpides N."/>
            <person name="Lykidis A."/>
            <person name="Zhao J.-S."/>
            <person name="Richardson P."/>
        </authorList>
    </citation>
    <scope>NUCLEOTIDE SEQUENCE [LARGE SCALE GENOMIC DNA]</scope>
    <source>
        <strain>ATCC 51908 / MS32</strain>
    </source>
</reference>
<proteinExistence type="inferred from homology"/>
<keyword id="KW-0021">Allosteric enzyme</keyword>
<keyword id="KW-0963">Cytoplasm</keyword>
<keyword id="KW-0378">Hydrolase</keyword>
<keyword id="KW-0479">Metal-binding</keyword>
<keyword id="KW-0645">Protease</keyword>
<keyword id="KW-1185">Reference proteome</keyword>
<keyword id="KW-0915">Sodium</keyword>
<keyword id="KW-0888">Threonine protease</keyword>
<dbReference type="EC" id="3.4.25.2" evidence="1"/>
<dbReference type="EMBL" id="CP000961">
    <property type="protein sequence ID" value="ACA88681.1"/>
    <property type="molecule type" value="Genomic_DNA"/>
</dbReference>
<dbReference type="RefSeq" id="WP_012327007.1">
    <property type="nucleotide sequence ID" value="NC_010506.1"/>
</dbReference>
<dbReference type="SMR" id="B1KK50"/>
<dbReference type="STRING" id="392500.Swoo_4429"/>
<dbReference type="MEROPS" id="T01.006"/>
<dbReference type="KEGG" id="swd:Swoo_4429"/>
<dbReference type="eggNOG" id="COG5405">
    <property type="taxonomic scope" value="Bacteria"/>
</dbReference>
<dbReference type="HOGENOM" id="CLU_093872_1_0_6"/>
<dbReference type="Proteomes" id="UP000002168">
    <property type="component" value="Chromosome"/>
</dbReference>
<dbReference type="GO" id="GO:0009376">
    <property type="term" value="C:HslUV protease complex"/>
    <property type="evidence" value="ECO:0007669"/>
    <property type="project" value="UniProtKB-UniRule"/>
</dbReference>
<dbReference type="GO" id="GO:0005839">
    <property type="term" value="C:proteasome core complex"/>
    <property type="evidence" value="ECO:0007669"/>
    <property type="project" value="InterPro"/>
</dbReference>
<dbReference type="GO" id="GO:0046872">
    <property type="term" value="F:metal ion binding"/>
    <property type="evidence" value="ECO:0007669"/>
    <property type="project" value="UniProtKB-KW"/>
</dbReference>
<dbReference type="GO" id="GO:0004298">
    <property type="term" value="F:threonine-type endopeptidase activity"/>
    <property type="evidence" value="ECO:0007669"/>
    <property type="project" value="UniProtKB-KW"/>
</dbReference>
<dbReference type="GO" id="GO:0051603">
    <property type="term" value="P:proteolysis involved in protein catabolic process"/>
    <property type="evidence" value="ECO:0007669"/>
    <property type="project" value="InterPro"/>
</dbReference>
<dbReference type="CDD" id="cd01913">
    <property type="entry name" value="protease_HslV"/>
    <property type="match status" value="1"/>
</dbReference>
<dbReference type="FunFam" id="3.60.20.10:FF:000002">
    <property type="entry name" value="ATP-dependent protease subunit HslV"/>
    <property type="match status" value="1"/>
</dbReference>
<dbReference type="Gene3D" id="3.60.20.10">
    <property type="entry name" value="Glutamine Phosphoribosylpyrophosphate, subunit 1, domain 1"/>
    <property type="match status" value="1"/>
</dbReference>
<dbReference type="HAMAP" id="MF_00248">
    <property type="entry name" value="HslV"/>
    <property type="match status" value="1"/>
</dbReference>
<dbReference type="InterPro" id="IPR022281">
    <property type="entry name" value="ATP-dep_Prtase_HsIV_su"/>
</dbReference>
<dbReference type="InterPro" id="IPR029055">
    <property type="entry name" value="Ntn_hydrolases_N"/>
</dbReference>
<dbReference type="InterPro" id="IPR001353">
    <property type="entry name" value="Proteasome_sua/b"/>
</dbReference>
<dbReference type="InterPro" id="IPR023333">
    <property type="entry name" value="Proteasome_suB-type"/>
</dbReference>
<dbReference type="NCBIfam" id="TIGR03692">
    <property type="entry name" value="ATP_dep_HslV"/>
    <property type="match status" value="1"/>
</dbReference>
<dbReference type="NCBIfam" id="NF003964">
    <property type="entry name" value="PRK05456.1"/>
    <property type="match status" value="1"/>
</dbReference>
<dbReference type="PANTHER" id="PTHR32194:SF0">
    <property type="entry name" value="ATP-DEPENDENT PROTEASE SUBUNIT HSLV"/>
    <property type="match status" value="1"/>
</dbReference>
<dbReference type="PANTHER" id="PTHR32194">
    <property type="entry name" value="METALLOPROTEASE TLDD"/>
    <property type="match status" value="1"/>
</dbReference>
<dbReference type="Pfam" id="PF00227">
    <property type="entry name" value="Proteasome"/>
    <property type="match status" value="1"/>
</dbReference>
<dbReference type="PIRSF" id="PIRSF039093">
    <property type="entry name" value="HslV"/>
    <property type="match status" value="1"/>
</dbReference>
<dbReference type="SUPFAM" id="SSF56235">
    <property type="entry name" value="N-terminal nucleophile aminohydrolases (Ntn hydrolases)"/>
    <property type="match status" value="1"/>
</dbReference>
<dbReference type="PROSITE" id="PS51476">
    <property type="entry name" value="PROTEASOME_BETA_2"/>
    <property type="match status" value="1"/>
</dbReference>
<evidence type="ECO:0000255" key="1">
    <source>
        <dbReference type="HAMAP-Rule" id="MF_00248"/>
    </source>
</evidence>
<feature type="chain" id="PRO_1000100916" description="ATP-dependent protease subunit HslV">
    <location>
        <begin position="1"/>
        <end position="174"/>
    </location>
</feature>
<feature type="active site" evidence="1">
    <location>
        <position position="2"/>
    </location>
</feature>
<feature type="binding site" evidence="1">
    <location>
        <position position="157"/>
    </location>
    <ligand>
        <name>Na(+)</name>
        <dbReference type="ChEBI" id="CHEBI:29101"/>
    </ligand>
</feature>
<feature type="binding site" evidence="1">
    <location>
        <position position="160"/>
    </location>
    <ligand>
        <name>Na(+)</name>
        <dbReference type="ChEBI" id="CHEBI:29101"/>
    </ligand>
</feature>
<feature type="binding site" evidence="1">
    <location>
        <position position="163"/>
    </location>
    <ligand>
        <name>Na(+)</name>
        <dbReference type="ChEBI" id="CHEBI:29101"/>
    </ligand>
</feature>
<name>HSLV_SHEWM</name>
<gene>
    <name evidence="1" type="primary">hslV</name>
    <name type="ordered locus">Swoo_4429</name>
</gene>
<organism>
    <name type="scientific">Shewanella woodyi (strain ATCC 51908 / MS32)</name>
    <dbReference type="NCBI Taxonomy" id="392500"/>
    <lineage>
        <taxon>Bacteria</taxon>
        <taxon>Pseudomonadati</taxon>
        <taxon>Pseudomonadota</taxon>
        <taxon>Gammaproteobacteria</taxon>
        <taxon>Alteromonadales</taxon>
        <taxon>Shewanellaceae</taxon>
        <taxon>Shewanella</taxon>
    </lineage>
</organism>
<comment type="function">
    <text evidence="1">Protease subunit of a proteasome-like degradation complex believed to be a general protein degrading machinery.</text>
</comment>
<comment type="catalytic activity">
    <reaction evidence="1">
        <text>ATP-dependent cleavage of peptide bonds with broad specificity.</text>
        <dbReference type="EC" id="3.4.25.2"/>
    </reaction>
</comment>
<comment type="activity regulation">
    <text evidence="1">Allosterically activated by HslU binding.</text>
</comment>
<comment type="subunit">
    <text evidence="1">A double ring-shaped homohexamer of HslV is capped on each side by a ring-shaped HslU homohexamer. The assembly of the HslU/HslV complex is dependent on binding of ATP.</text>
</comment>
<comment type="subcellular location">
    <subcellularLocation>
        <location evidence="1">Cytoplasm</location>
    </subcellularLocation>
</comment>
<comment type="similarity">
    <text evidence="1">Belongs to the peptidase T1B family. HslV subfamily.</text>
</comment>
<sequence>MTTIVSVRRNNQVVIAGDGQVSLGNTVMKGNAKKVRRLYHNKVLAGFAGGTADAFTLFERFEAKLEMHQGHLMKAAVEMAKDWRSDKMLRKLEALLAVADDTCSLIITGNGDVVQPENDLIAIGSGGNFAQSAATALLENTELTALEIAEKSLTIAGDICVFTNQFKTIEELNY</sequence>
<accession>B1KK50</accession>
<protein>
    <recommendedName>
        <fullName evidence="1">ATP-dependent protease subunit HslV</fullName>
        <ecNumber evidence="1">3.4.25.2</ecNumber>
    </recommendedName>
</protein>